<feature type="chain" id="PRO_1000093712" description="Methionine--tRNA ligase">
    <location>
        <begin position="1"/>
        <end position="677"/>
    </location>
</feature>
<feature type="domain" description="tRNA-binding" evidence="1">
    <location>
        <begin position="575"/>
        <end position="677"/>
    </location>
</feature>
<feature type="short sequence motif" description="'HIGH' region">
    <location>
        <begin position="15"/>
        <end position="25"/>
    </location>
</feature>
<feature type="short sequence motif" description="'KMSKS' region">
    <location>
        <begin position="333"/>
        <end position="337"/>
    </location>
</feature>
<feature type="binding site" evidence="1">
    <location>
        <position position="146"/>
    </location>
    <ligand>
        <name>Zn(2+)</name>
        <dbReference type="ChEBI" id="CHEBI:29105"/>
    </ligand>
</feature>
<feature type="binding site" evidence="1">
    <location>
        <position position="149"/>
    </location>
    <ligand>
        <name>Zn(2+)</name>
        <dbReference type="ChEBI" id="CHEBI:29105"/>
    </ligand>
</feature>
<feature type="binding site" evidence="1">
    <location>
        <position position="159"/>
    </location>
    <ligand>
        <name>Zn(2+)</name>
        <dbReference type="ChEBI" id="CHEBI:29105"/>
    </ligand>
</feature>
<feature type="binding site" evidence="1">
    <location>
        <position position="162"/>
    </location>
    <ligand>
        <name>Zn(2+)</name>
        <dbReference type="ChEBI" id="CHEBI:29105"/>
    </ligand>
</feature>
<feature type="binding site" evidence="1">
    <location>
        <position position="336"/>
    </location>
    <ligand>
        <name>ATP</name>
        <dbReference type="ChEBI" id="CHEBI:30616"/>
    </ligand>
</feature>
<protein>
    <recommendedName>
        <fullName evidence="1">Methionine--tRNA ligase</fullName>
        <ecNumber evidence="1">6.1.1.10</ecNumber>
    </recommendedName>
    <alternativeName>
        <fullName evidence="1">Methionyl-tRNA synthetase</fullName>
        <shortName evidence="1">MetRS</shortName>
    </alternativeName>
</protein>
<reference key="1">
    <citation type="journal article" date="2011" name="Proc. Natl. Acad. Sci. U.S.A.">
        <title>Genomic anatomy of Escherichia coli O157:H7 outbreaks.</title>
        <authorList>
            <person name="Eppinger M."/>
            <person name="Mammel M.K."/>
            <person name="Leclerc J.E."/>
            <person name="Ravel J."/>
            <person name="Cebula T.A."/>
        </authorList>
    </citation>
    <scope>NUCLEOTIDE SEQUENCE [LARGE SCALE GENOMIC DNA]</scope>
    <source>
        <strain>EC4115 / EHEC</strain>
    </source>
</reference>
<accession>B5YV64</accession>
<sequence length="677" mass="76255">MTQVAKKILVTCALPYANGSIHLGHMLEHIQADVWVRYQRMRGHEVNFICADDAHGTPIMLKAQQLGITPEQMIGEMSQEHQTDFAGFNISYDNYHSTHSEENRQLSELIYTRLKENGFIKNRTISQLYDPEKGMFLPDRFVKGTCPKCKSPDQYGDNCEVCGATYSPTELIEPKSVVSGATPVMRDSEHFFFDLPSFSEMLQAWTRSGALQEQVANKMQEWFESGLQQWDISRDAPYFGFEIPNAPGKYFYVWLDAPIGYMGSFKNLCDKRGDSVSFDEYWKKDSTAELYHFIGKDIVYFHSLFWPAMLEGSNFRKPTNLFVHGYVTVNGAKMSKSRGTFIKASTWLNHFDADSLRYYYTAKLSSRIDDIDLNLEDFVQRVNADIVNKVVNLASRNAGFINKRFDGVLASELADPQLYKTFTDAAEVIGEAWESREFGKAVREIMALADLANRYVDEQAPWVVAKQEGRDADLQAICSMGINLFRVLMTYLKPVLPKLTERAEAFLNTELTWDGIQQPLLGHKVNPFKALYNRIDMKQVEALVEASKEEVKAAAAPVTGPLADDPIQETITFDDFAKVDLRVALIENAEFVEGSDKLLRLTLDLGGEKRNVFSGIRSAYPDPQALIGRHTIMVANLAPRKMRFGISEGMVMAAGPGGKDIFLLSPDAGAKPGHQVK</sequence>
<evidence type="ECO:0000255" key="1">
    <source>
        <dbReference type="HAMAP-Rule" id="MF_00098"/>
    </source>
</evidence>
<gene>
    <name evidence="1" type="primary">metG</name>
    <name type="ordered locus">ECH74115_3097</name>
</gene>
<dbReference type="EC" id="6.1.1.10" evidence="1"/>
<dbReference type="EMBL" id="CP001164">
    <property type="protein sequence ID" value="ACI36354.1"/>
    <property type="molecule type" value="Genomic_DNA"/>
</dbReference>
<dbReference type="RefSeq" id="WP_001301615.1">
    <property type="nucleotide sequence ID" value="NC_011353.1"/>
</dbReference>
<dbReference type="SMR" id="B5YV64"/>
<dbReference type="GeneID" id="75172235"/>
<dbReference type="KEGG" id="ecf:ECH74115_3097"/>
<dbReference type="HOGENOM" id="CLU_009710_7_0_6"/>
<dbReference type="GO" id="GO:0005829">
    <property type="term" value="C:cytosol"/>
    <property type="evidence" value="ECO:0007669"/>
    <property type="project" value="TreeGrafter"/>
</dbReference>
<dbReference type="GO" id="GO:0005524">
    <property type="term" value="F:ATP binding"/>
    <property type="evidence" value="ECO:0007669"/>
    <property type="project" value="UniProtKB-UniRule"/>
</dbReference>
<dbReference type="GO" id="GO:0046872">
    <property type="term" value="F:metal ion binding"/>
    <property type="evidence" value="ECO:0007669"/>
    <property type="project" value="UniProtKB-KW"/>
</dbReference>
<dbReference type="GO" id="GO:0004825">
    <property type="term" value="F:methionine-tRNA ligase activity"/>
    <property type="evidence" value="ECO:0007669"/>
    <property type="project" value="UniProtKB-UniRule"/>
</dbReference>
<dbReference type="GO" id="GO:0000049">
    <property type="term" value="F:tRNA binding"/>
    <property type="evidence" value="ECO:0007669"/>
    <property type="project" value="UniProtKB-KW"/>
</dbReference>
<dbReference type="GO" id="GO:0006431">
    <property type="term" value="P:methionyl-tRNA aminoacylation"/>
    <property type="evidence" value="ECO:0007669"/>
    <property type="project" value="UniProtKB-UniRule"/>
</dbReference>
<dbReference type="CDD" id="cd07957">
    <property type="entry name" value="Anticodon_Ia_Met"/>
    <property type="match status" value="1"/>
</dbReference>
<dbReference type="CDD" id="cd00814">
    <property type="entry name" value="MetRS_core"/>
    <property type="match status" value="1"/>
</dbReference>
<dbReference type="CDD" id="cd02800">
    <property type="entry name" value="tRNA_bind_EcMetRS_like"/>
    <property type="match status" value="1"/>
</dbReference>
<dbReference type="FunFam" id="1.10.730.10:FF:000005">
    <property type="entry name" value="Methionine--tRNA ligase"/>
    <property type="match status" value="1"/>
</dbReference>
<dbReference type="FunFam" id="2.20.28.20:FF:000001">
    <property type="entry name" value="Methionine--tRNA ligase"/>
    <property type="match status" value="1"/>
</dbReference>
<dbReference type="FunFam" id="2.40.50.140:FF:000042">
    <property type="entry name" value="Methionine--tRNA ligase"/>
    <property type="match status" value="1"/>
</dbReference>
<dbReference type="Gene3D" id="3.40.50.620">
    <property type="entry name" value="HUPs"/>
    <property type="match status" value="1"/>
</dbReference>
<dbReference type="Gene3D" id="1.10.730.10">
    <property type="entry name" value="Isoleucyl-tRNA Synthetase, Domain 1"/>
    <property type="match status" value="1"/>
</dbReference>
<dbReference type="Gene3D" id="2.20.28.20">
    <property type="entry name" value="Methionyl-tRNA synthetase, Zn-domain"/>
    <property type="match status" value="1"/>
</dbReference>
<dbReference type="Gene3D" id="2.40.50.140">
    <property type="entry name" value="Nucleic acid-binding proteins"/>
    <property type="match status" value="1"/>
</dbReference>
<dbReference type="HAMAP" id="MF_00098">
    <property type="entry name" value="Met_tRNA_synth_type1"/>
    <property type="match status" value="1"/>
</dbReference>
<dbReference type="InterPro" id="IPR001412">
    <property type="entry name" value="aa-tRNA-synth_I_CS"/>
</dbReference>
<dbReference type="InterPro" id="IPR041872">
    <property type="entry name" value="Anticodon_Met"/>
</dbReference>
<dbReference type="InterPro" id="IPR004495">
    <property type="entry name" value="Met-tRNA-synth_bsu_C"/>
</dbReference>
<dbReference type="InterPro" id="IPR023458">
    <property type="entry name" value="Met-tRNA_ligase_1"/>
</dbReference>
<dbReference type="InterPro" id="IPR014758">
    <property type="entry name" value="Met-tRNA_synth"/>
</dbReference>
<dbReference type="InterPro" id="IPR015413">
    <property type="entry name" value="Methionyl/Leucyl_tRNA_Synth"/>
</dbReference>
<dbReference type="InterPro" id="IPR033911">
    <property type="entry name" value="MetRS_core"/>
</dbReference>
<dbReference type="InterPro" id="IPR029038">
    <property type="entry name" value="MetRS_Zn"/>
</dbReference>
<dbReference type="InterPro" id="IPR012340">
    <property type="entry name" value="NA-bd_OB-fold"/>
</dbReference>
<dbReference type="InterPro" id="IPR014729">
    <property type="entry name" value="Rossmann-like_a/b/a_fold"/>
</dbReference>
<dbReference type="InterPro" id="IPR002547">
    <property type="entry name" value="tRNA-bd_dom"/>
</dbReference>
<dbReference type="InterPro" id="IPR009080">
    <property type="entry name" value="tRNAsynth_Ia_anticodon-bd"/>
</dbReference>
<dbReference type="NCBIfam" id="TIGR00398">
    <property type="entry name" value="metG"/>
    <property type="match status" value="1"/>
</dbReference>
<dbReference type="NCBIfam" id="TIGR00399">
    <property type="entry name" value="metG_C_term"/>
    <property type="match status" value="1"/>
</dbReference>
<dbReference type="NCBIfam" id="NF001100">
    <property type="entry name" value="PRK00133.1"/>
    <property type="match status" value="1"/>
</dbReference>
<dbReference type="PANTHER" id="PTHR45765">
    <property type="entry name" value="METHIONINE--TRNA LIGASE"/>
    <property type="match status" value="1"/>
</dbReference>
<dbReference type="PANTHER" id="PTHR45765:SF1">
    <property type="entry name" value="METHIONINE--TRNA LIGASE, CYTOPLASMIC"/>
    <property type="match status" value="1"/>
</dbReference>
<dbReference type="Pfam" id="PF19303">
    <property type="entry name" value="Anticodon_3"/>
    <property type="match status" value="1"/>
</dbReference>
<dbReference type="Pfam" id="PF09334">
    <property type="entry name" value="tRNA-synt_1g"/>
    <property type="match status" value="1"/>
</dbReference>
<dbReference type="Pfam" id="PF01588">
    <property type="entry name" value="tRNA_bind"/>
    <property type="match status" value="1"/>
</dbReference>
<dbReference type="PRINTS" id="PR01041">
    <property type="entry name" value="TRNASYNTHMET"/>
</dbReference>
<dbReference type="SUPFAM" id="SSF47323">
    <property type="entry name" value="Anticodon-binding domain of a subclass of class I aminoacyl-tRNA synthetases"/>
    <property type="match status" value="1"/>
</dbReference>
<dbReference type="SUPFAM" id="SSF57770">
    <property type="entry name" value="Methionyl-tRNA synthetase (MetRS), Zn-domain"/>
    <property type="match status" value="1"/>
</dbReference>
<dbReference type="SUPFAM" id="SSF50249">
    <property type="entry name" value="Nucleic acid-binding proteins"/>
    <property type="match status" value="1"/>
</dbReference>
<dbReference type="SUPFAM" id="SSF52374">
    <property type="entry name" value="Nucleotidylyl transferase"/>
    <property type="match status" value="1"/>
</dbReference>
<dbReference type="PROSITE" id="PS00178">
    <property type="entry name" value="AA_TRNA_LIGASE_I"/>
    <property type="match status" value="1"/>
</dbReference>
<dbReference type="PROSITE" id="PS50886">
    <property type="entry name" value="TRBD"/>
    <property type="match status" value="1"/>
</dbReference>
<comment type="function">
    <text evidence="1">Is required not only for elongation of protein synthesis but also for the initiation of all mRNA translation through initiator tRNA(fMet) aminoacylation.</text>
</comment>
<comment type="catalytic activity">
    <reaction evidence="1">
        <text>tRNA(Met) + L-methionine + ATP = L-methionyl-tRNA(Met) + AMP + diphosphate</text>
        <dbReference type="Rhea" id="RHEA:13481"/>
        <dbReference type="Rhea" id="RHEA-COMP:9667"/>
        <dbReference type="Rhea" id="RHEA-COMP:9698"/>
        <dbReference type="ChEBI" id="CHEBI:30616"/>
        <dbReference type="ChEBI" id="CHEBI:33019"/>
        <dbReference type="ChEBI" id="CHEBI:57844"/>
        <dbReference type="ChEBI" id="CHEBI:78442"/>
        <dbReference type="ChEBI" id="CHEBI:78530"/>
        <dbReference type="ChEBI" id="CHEBI:456215"/>
        <dbReference type="EC" id="6.1.1.10"/>
    </reaction>
</comment>
<comment type="cofactor">
    <cofactor evidence="1">
        <name>Zn(2+)</name>
        <dbReference type="ChEBI" id="CHEBI:29105"/>
    </cofactor>
    <text evidence="1">Binds 1 zinc ion per subunit.</text>
</comment>
<comment type="subunit">
    <text evidence="1">Homodimer.</text>
</comment>
<comment type="subcellular location">
    <subcellularLocation>
        <location evidence="1">Cytoplasm</location>
    </subcellularLocation>
</comment>
<comment type="similarity">
    <text evidence="1">Belongs to the class-I aminoacyl-tRNA synthetase family. MetG type 1 subfamily.</text>
</comment>
<name>SYM_ECO5E</name>
<proteinExistence type="inferred from homology"/>
<keyword id="KW-0030">Aminoacyl-tRNA synthetase</keyword>
<keyword id="KW-0067">ATP-binding</keyword>
<keyword id="KW-0963">Cytoplasm</keyword>
<keyword id="KW-0436">Ligase</keyword>
<keyword id="KW-0479">Metal-binding</keyword>
<keyword id="KW-0547">Nucleotide-binding</keyword>
<keyword id="KW-0648">Protein biosynthesis</keyword>
<keyword id="KW-0694">RNA-binding</keyword>
<keyword id="KW-0820">tRNA-binding</keyword>
<keyword id="KW-0862">Zinc</keyword>
<organism>
    <name type="scientific">Escherichia coli O157:H7 (strain EC4115 / EHEC)</name>
    <dbReference type="NCBI Taxonomy" id="444450"/>
    <lineage>
        <taxon>Bacteria</taxon>
        <taxon>Pseudomonadati</taxon>
        <taxon>Pseudomonadota</taxon>
        <taxon>Gammaproteobacteria</taxon>
        <taxon>Enterobacterales</taxon>
        <taxon>Enterobacteriaceae</taxon>
        <taxon>Escherichia</taxon>
    </lineage>
</organism>